<comment type="catalytic activity">
    <reaction evidence="1">
        <text>L-arginine + H2O = urea + L-ornithine</text>
        <dbReference type="Rhea" id="RHEA:20569"/>
        <dbReference type="ChEBI" id="CHEBI:15377"/>
        <dbReference type="ChEBI" id="CHEBI:16199"/>
        <dbReference type="ChEBI" id="CHEBI:32682"/>
        <dbReference type="ChEBI" id="CHEBI:46911"/>
        <dbReference type="EC" id="3.5.3.1"/>
    </reaction>
</comment>
<comment type="cofactor">
    <cofactor evidence="3">
        <name>Mn(2+)</name>
        <dbReference type="ChEBI" id="CHEBI:29035"/>
    </cofactor>
    <text evidence="3">Binds 2 manganese ions per subunit.</text>
</comment>
<comment type="pathway">
    <text evidence="1">Nitrogen metabolism; urea cycle; L-ornithine and urea from L-arginine: step 1/1.</text>
</comment>
<comment type="similarity">
    <text evidence="3">Belongs to the arginase family.</text>
</comment>
<accession>Q7M0Z3</accession>
<reference key="1">
    <citation type="journal article" date="1997" name="Biosci. Biotechnol. Biochem.">
        <title>Molecular cloning and nucleotide sequence of the arginase gene of Bacillus brevis TT02-8 and its expression in Escherichia coli.</title>
        <authorList>
            <person name="Shimotohno K.W."/>
            <person name="Miwa I."/>
            <person name="Endo T."/>
        </authorList>
    </citation>
    <scope>NUCLEOTIDE SEQUENCE [GENOMIC DNA]</scope>
    <scope>PROTEIN SEQUENCE OF 1-36</scope>
    <source>
        <strain>TT02-8</strain>
    </source>
</reference>
<feature type="chain" id="PRO_0000173713" description="Arginase">
    <location>
        <begin position="1"/>
        <end position="298"/>
    </location>
</feature>
<feature type="binding site" evidence="3">
    <location>
        <position position="98"/>
    </location>
    <ligand>
        <name>Mn(2+)</name>
        <dbReference type="ChEBI" id="CHEBI:29035"/>
        <label>1</label>
    </ligand>
</feature>
<feature type="binding site" evidence="3">
    <location>
        <position position="121"/>
    </location>
    <ligand>
        <name>Mn(2+)</name>
        <dbReference type="ChEBI" id="CHEBI:29035"/>
        <label>1</label>
    </ligand>
</feature>
<feature type="binding site" evidence="3">
    <location>
        <position position="121"/>
    </location>
    <ligand>
        <name>Mn(2+)</name>
        <dbReference type="ChEBI" id="CHEBI:29035"/>
        <label>2</label>
    </ligand>
</feature>
<feature type="binding site" evidence="2">
    <location>
        <begin position="123"/>
        <end position="127"/>
    </location>
    <ligand>
        <name>substrate</name>
    </ligand>
</feature>
<feature type="binding site" evidence="3">
    <location>
        <position position="123"/>
    </location>
    <ligand>
        <name>Mn(2+)</name>
        <dbReference type="ChEBI" id="CHEBI:29035"/>
        <label>2</label>
    </ligand>
</feature>
<feature type="binding site" evidence="3">
    <location>
        <position position="125"/>
    </location>
    <ligand>
        <name>Mn(2+)</name>
        <dbReference type="ChEBI" id="CHEBI:29035"/>
        <label>1</label>
    </ligand>
</feature>
<feature type="binding site" evidence="2">
    <location>
        <begin position="134"/>
        <end position="136"/>
    </location>
    <ligand>
        <name>substrate</name>
    </ligand>
</feature>
<feature type="binding site" evidence="2">
    <location>
        <position position="177"/>
    </location>
    <ligand>
        <name>substrate</name>
    </ligand>
</feature>
<feature type="binding site" evidence="3">
    <location>
        <position position="225"/>
    </location>
    <ligand>
        <name>Mn(2+)</name>
        <dbReference type="ChEBI" id="CHEBI:29035"/>
        <label>1</label>
    </ligand>
</feature>
<feature type="binding site" evidence="3">
    <location>
        <position position="225"/>
    </location>
    <ligand>
        <name>Mn(2+)</name>
        <dbReference type="ChEBI" id="CHEBI:29035"/>
        <label>2</label>
    </ligand>
</feature>
<feature type="binding site" evidence="3">
    <location>
        <position position="227"/>
    </location>
    <ligand>
        <name>Mn(2+)</name>
        <dbReference type="ChEBI" id="CHEBI:29035"/>
        <label>2</label>
    </ligand>
</feature>
<feature type="binding site" evidence="2">
    <location>
        <position position="239"/>
    </location>
    <ligand>
        <name>substrate</name>
    </ligand>
</feature>
<feature type="binding site" evidence="2">
    <location>
        <position position="270"/>
    </location>
    <ligand>
        <name>substrate</name>
    </ligand>
</feature>
<organism>
    <name type="scientific">Brevibacillus brevis</name>
    <name type="common">Bacillus brevis</name>
    <dbReference type="NCBI Taxonomy" id="1393"/>
    <lineage>
        <taxon>Bacteria</taxon>
        <taxon>Bacillati</taxon>
        <taxon>Bacillota</taxon>
        <taxon>Bacilli</taxon>
        <taxon>Bacillales</taxon>
        <taxon>Paenibacillaceae</taxon>
        <taxon>Brevibacillus</taxon>
    </lineage>
</organism>
<keyword id="KW-0056">Arginine metabolism</keyword>
<keyword id="KW-0903">Direct protein sequencing</keyword>
<keyword id="KW-0378">Hydrolase</keyword>
<keyword id="KW-0464">Manganese</keyword>
<keyword id="KW-0479">Metal-binding</keyword>
<protein>
    <recommendedName>
        <fullName>Arginase</fullName>
        <ecNumber evidence="1">3.5.3.1</ecNumber>
    </recommendedName>
</protein>
<proteinExistence type="evidence at protein level"/>
<evidence type="ECO:0000250" key="1">
    <source>
        <dbReference type="UniProtKB" id="P05089"/>
    </source>
</evidence>
<evidence type="ECO:0000250" key="2">
    <source>
        <dbReference type="UniProtKB" id="P53608"/>
    </source>
</evidence>
<evidence type="ECO:0000255" key="3">
    <source>
        <dbReference type="PROSITE-ProRule" id="PRU00742"/>
    </source>
</evidence>
<dbReference type="EC" id="3.5.3.1" evidence="1"/>
<dbReference type="PIR" id="JC5866">
    <property type="entry name" value="JC5866"/>
</dbReference>
<dbReference type="SMR" id="Q7M0Z3"/>
<dbReference type="eggNOG" id="COG0010">
    <property type="taxonomic scope" value="Bacteria"/>
</dbReference>
<dbReference type="SABIO-RK" id="Q7M0Z3"/>
<dbReference type="UniPathway" id="UPA00158">
    <property type="reaction ID" value="UER00270"/>
</dbReference>
<dbReference type="GO" id="GO:0005737">
    <property type="term" value="C:cytoplasm"/>
    <property type="evidence" value="ECO:0007669"/>
    <property type="project" value="TreeGrafter"/>
</dbReference>
<dbReference type="GO" id="GO:0004053">
    <property type="term" value="F:arginase activity"/>
    <property type="evidence" value="ECO:0007669"/>
    <property type="project" value="UniProtKB-EC"/>
</dbReference>
<dbReference type="GO" id="GO:0030145">
    <property type="term" value="F:manganese ion binding"/>
    <property type="evidence" value="ECO:0007669"/>
    <property type="project" value="TreeGrafter"/>
</dbReference>
<dbReference type="GO" id="GO:0019547">
    <property type="term" value="P:arginine catabolic process to ornithine"/>
    <property type="evidence" value="ECO:0007669"/>
    <property type="project" value="TreeGrafter"/>
</dbReference>
<dbReference type="GO" id="GO:0000050">
    <property type="term" value="P:urea cycle"/>
    <property type="evidence" value="ECO:0007669"/>
    <property type="project" value="UniProtKB-UniPathway"/>
</dbReference>
<dbReference type="CDD" id="cd09989">
    <property type="entry name" value="Arginase"/>
    <property type="match status" value="1"/>
</dbReference>
<dbReference type="FunFam" id="3.40.800.10:FF:000005">
    <property type="entry name" value="Arginase"/>
    <property type="match status" value="1"/>
</dbReference>
<dbReference type="Gene3D" id="3.40.800.10">
    <property type="entry name" value="Ureohydrolase domain"/>
    <property type="match status" value="1"/>
</dbReference>
<dbReference type="InterPro" id="IPR014033">
    <property type="entry name" value="Arginase"/>
</dbReference>
<dbReference type="InterPro" id="IPR006035">
    <property type="entry name" value="Ureohydrolase"/>
</dbReference>
<dbReference type="InterPro" id="IPR023696">
    <property type="entry name" value="Ureohydrolase_dom_sf"/>
</dbReference>
<dbReference type="InterPro" id="IPR020855">
    <property type="entry name" value="Ureohydrolase_Mn_BS"/>
</dbReference>
<dbReference type="NCBIfam" id="TIGR01229">
    <property type="entry name" value="rocF_arginase"/>
    <property type="match status" value="1"/>
</dbReference>
<dbReference type="PANTHER" id="PTHR43782">
    <property type="entry name" value="ARGINASE"/>
    <property type="match status" value="1"/>
</dbReference>
<dbReference type="PANTHER" id="PTHR43782:SF3">
    <property type="entry name" value="ARGINASE"/>
    <property type="match status" value="1"/>
</dbReference>
<dbReference type="Pfam" id="PF00491">
    <property type="entry name" value="Arginase"/>
    <property type="match status" value="1"/>
</dbReference>
<dbReference type="PIRSF" id="PIRSF036979">
    <property type="entry name" value="Arginase"/>
    <property type="match status" value="1"/>
</dbReference>
<dbReference type="PRINTS" id="PR00116">
    <property type="entry name" value="ARGINASE"/>
</dbReference>
<dbReference type="SUPFAM" id="SSF52768">
    <property type="entry name" value="Arginase/deacetylase"/>
    <property type="match status" value="1"/>
</dbReference>
<dbReference type="PROSITE" id="PS01053">
    <property type="entry name" value="ARGINASE_1"/>
    <property type="match status" value="1"/>
</dbReference>
<dbReference type="PROSITE" id="PS51409">
    <property type="entry name" value="ARGINASE_2"/>
    <property type="match status" value="1"/>
</dbReference>
<sequence>MNKNMSIVGVPMDLGADRRGVDMGPSAIRYAGVVARLEKMGFNIEDRGDIFVTLPHHFTETENHKYLDEVVEANEKLANVVSDIMTAGRFPLVLGGDHSIALGTIAGVAKHVKNLGVICLDAHGDLNTGATSPSGNIHGMPLAASLGYGHERLTNIGGYTPKVKAENVVIIGARDLDQGERELIKRIGMKVFTMHEIDKLGMARVMDEAIAHVSKNTDGVHLSLDLDGLDPHDAPGVGTPVIGGISYREGHVSLEMLADADILCSAEFVEVNPILDRENMTARVAVALMSSVFGDKLL</sequence>
<name>ARGI_BREBE</name>
<gene>
    <name type="primary">rocF</name>
</gene>